<gene>
    <name evidence="1" type="primary">prs</name>
    <name type="synonym">prsA</name>
    <name type="ordered locus">BP3125</name>
</gene>
<accession>Q7VUH1</accession>
<sequence length="310" mass="33511">MIFTGTANTRLAVDVVNHLDMSLGKMTVGRYSDGEVMVEINENVRGKDVFVLQPTCAPTNDNLMEIMVMVDALRRASAGRITAAIPYFGYARQDRRPRSARVAISAKVVANMLQVAGVDRVLTMDLHADQIQGFFDIPVDNIYAGPILLGDIWRRNFSNLVVVSPDIGGVVRARALAKQLEADLAIIDKRRPRANVSEVMNIIGEVDGRTCIIMDDMVDTAGTLCKAAQALKDRGAGAVYAYCTHPVLSGGAIERIETSSLDELVVTDTIPLSEQAQACGKIRQLSCAALLGETILRISNAESVSSLFAD</sequence>
<dbReference type="EC" id="2.7.6.1" evidence="1"/>
<dbReference type="EMBL" id="BX640420">
    <property type="protein sequence ID" value="CAE43392.1"/>
    <property type="status" value="ALT_INIT"/>
    <property type="molecule type" value="Genomic_DNA"/>
</dbReference>
<dbReference type="RefSeq" id="NP_881690.1">
    <property type="nucleotide sequence ID" value="NC_002929.2"/>
</dbReference>
<dbReference type="SMR" id="Q7VUH1"/>
<dbReference type="STRING" id="257313.BP3125"/>
<dbReference type="PaxDb" id="257313-BP3125"/>
<dbReference type="KEGG" id="bpe:BP3125"/>
<dbReference type="PATRIC" id="fig|257313.5.peg.3376"/>
<dbReference type="eggNOG" id="COG0462">
    <property type="taxonomic scope" value="Bacteria"/>
</dbReference>
<dbReference type="HOGENOM" id="CLU_033546_2_0_4"/>
<dbReference type="UniPathway" id="UPA00087">
    <property type="reaction ID" value="UER00172"/>
</dbReference>
<dbReference type="Proteomes" id="UP000002676">
    <property type="component" value="Chromosome"/>
</dbReference>
<dbReference type="GO" id="GO:0005737">
    <property type="term" value="C:cytoplasm"/>
    <property type="evidence" value="ECO:0007669"/>
    <property type="project" value="UniProtKB-SubCell"/>
</dbReference>
<dbReference type="GO" id="GO:0002189">
    <property type="term" value="C:ribose phosphate diphosphokinase complex"/>
    <property type="evidence" value="ECO:0007669"/>
    <property type="project" value="TreeGrafter"/>
</dbReference>
<dbReference type="GO" id="GO:0005524">
    <property type="term" value="F:ATP binding"/>
    <property type="evidence" value="ECO:0007669"/>
    <property type="project" value="UniProtKB-KW"/>
</dbReference>
<dbReference type="GO" id="GO:0016301">
    <property type="term" value="F:kinase activity"/>
    <property type="evidence" value="ECO:0007669"/>
    <property type="project" value="UniProtKB-KW"/>
</dbReference>
<dbReference type="GO" id="GO:0000287">
    <property type="term" value="F:magnesium ion binding"/>
    <property type="evidence" value="ECO:0007669"/>
    <property type="project" value="UniProtKB-UniRule"/>
</dbReference>
<dbReference type="GO" id="GO:0004749">
    <property type="term" value="F:ribose phosphate diphosphokinase activity"/>
    <property type="evidence" value="ECO:0007669"/>
    <property type="project" value="UniProtKB-UniRule"/>
</dbReference>
<dbReference type="GO" id="GO:0006015">
    <property type="term" value="P:5-phosphoribose 1-diphosphate biosynthetic process"/>
    <property type="evidence" value="ECO:0007669"/>
    <property type="project" value="UniProtKB-UniRule"/>
</dbReference>
<dbReference type="GO" id="GO:0006164">
    <property type="term" value="P:purine nucleotide biosynthetic process"/>
    <property type="evidence" value="ECO:0007669"/>
    <property type="project" value="TreeGrafter"/>
</dbReference>
<dbReference type="GO" id="GO:0009156">
    <property type="term" value="P:ribonucleoside monophosphate biosynthetic process"/>
    <property type="evidence" value="ECO:0007669"/>
    <property type="project" value="InterPro"/>
</dbReference>
<dbReference type="CDD" id="cd06223">
    <property type="entry name" value="PRTases_typeI"/>
    <property type="match status" value="1"/>
</dbReference>
<dbReference type="FunFam" id="3.40.50.2020:FF:000001">
    <property type="entry name" value="Ribose-phosphate pyrophosphokinase"/>
    <property type="match status" value="1"/>
</dbReference>
<dbReference type="Gene3D" id="3.40.50.2020">
    <property type="match status" value="2"/>
</dbReference>
<dbReference type="HAMAP" id="MF_00583_B">
    <property type="entry name" value="RibP_PPkinase_B"/>
    <property type="match status" value="1"/>
</dbReference>
<dbReference type="InterPro" id="IPR000842">
    <property type="entry name" value="PRib_PP_synth_CS"/>
</dbReference>
<dbReference type="InterPro" id="IPR029099">
    <property type="entry name" value="Pribosyltran_N"/>
</dbReference>
<dbReference type="InterPro" id="IPR000836">
    <property type="entry name" value="PRibTrfase_dom"/>
</dbReference>
<dbReference type="InterPro" id="IPR029057">
    <property type="entry name" value="PRTase-like"/>
</dbReference>
<dbReference type="InterPro" id="IPR005946">
    <property type="entry name" value="Rib-P_diPkinase"/>
</dbReference>
<dbReference type="InterPro" id="IPR037515">
    <property type="entry name" value="Rib-P_diPkinase_bac"/>
</dbReference>
<dbReference type="NCBIfam" id="NF002320">
    <property type="entry name" value="PRK01259.1"/>
    <property type="match status" value="1"/>
</dbReference>
<dbReference type="NCBIfam" id="TIGR01251">
    <property type="entry name" value="ribP_PPkin"/>
    <property type="match status" value="1"/>
</dbReference>
<dbReference type="PANTHER" id="PTHR10210">
    <property type="entry name" value="RIBOSE-PHOSPHATE DIPHOSPHOKINASE FAMILY MEMBER"/>
    <property type="match status" value="1"/>
</dbReference>
<dbReference type="PANTHER" id="PTHR10210:SF41">
    <property type="entry name" value="RIBOSE-PHOSPHATE PYROPHOSPHOKINASE 1, CHLOROPLASTIC"/>
    <property type="match status" value="1"/>
</dbReference>
<dbReference type="Pfam" id="PF14572">
    <property type="entry name" value="Pribosyl_synth"/>
    <property type="match status" value="1"/>
</dbReference>
<dbReference type="Pfam" id="PF13793">
    <property type="entry name" value="Pribosyltran_N"/>
    <property type="match status" value="1"/>
</dbReference>
<dbReference type="SMART" id="SM01400">
    <property type="entry name" value="Pribosyltran_N"/>
    <property type="match status" value="1"/>
</dbReference>
<dbReference type="SUPFAM" id="SSF53271">
    <property type="entry name" value="PRTase-like"/>
    <property type="match status" value="1"/>
</dbReference>
<dbReference type="PROSITE" id="PS00114">
    <property type="entry name" value="PRPP_SYNTHASE"/>
    <property type="match status" value="1"/>
</dbReference>
<name>KPRS_BORPE</name>
<keyword id="KW-0067">ATP-binding</keyword>
<keyword id="KW-0963">Cytoplasm</keyword>
<keyword id="KW-0418">Kinase</keyword>
<keyword id="KW-0460">Magnesium</keyword>
<keyword id="KW-0479">Metal-binding</keyword>
<keyword id="KW-0545">Nucleotide biosynthesis</keyword>
<keyword id="KW-0547">Nucleotide-binding</keyword>
<keyword id="KW-1185">Reference proteome</keyword>
<keyword id="KW-0808">Transferase</keyword>
<protein>
    <recommendedName>
        <fullName evidence="1">Ribose-phosphate pyrophosphokinase</fullName>
        <shortName evidence="1">RPPK</shortName>
        <ecNumber evidence="1">2.7.6.1</ecNumber>
    </recommendedName>
    <alternativeName>
        <fullName evidence="1">5-phospho-D-ribosyl alpha-1-diphosphate synthase</fullName>
    </alternativeName>
    <alternativeName>
        <fullName evidence="1">Phosphoribosyl diphosphate synthase</fullName>
    </alternativeName>
    <alternativeName>
        <fullName evidence="1">Phosphoribosyl pyrophosphate synthase</fullName>
        <shortName evidence="1">P-Rib-PP synthase</shortName>
        <shortName evidence="1">PRPP synthase</shortName>
        <shortName evidence="1">PRPPase</shortName>
    </alternativeName>
</protein>
<comment type="function">
    <text evidence="1">Involved in the biosynthesis of the central metabolite phospho-alpha-D-ribosyl-1-pyrophosphate (PRPP) via the transfer of pyrophosphoryl group from ATP to 1-hydroxyl of ribose-5-phosphate (Rib-5-P).</text>
</comment>
<comment type="catalytic activity">
    <reaction evidence="1">
        <text>D-ribose 5-phosphate + ATP = 5-phospho-alpha-D-ribose 1-diphosphate + AMP + H(+)</text>
        <dbReference type="Rhea" id="RHEA:15609"/>
        <dbReference type="ChEBI" id="CHEBI:15378"/>
        <dbReference type="ChEBI" id="CHEBI:30616"/>
        <dbReference type="ChEBI" id="CHEBI:58017"/>
        <dbReference type="ChEBI" id="CHEBI:78346"/>
        <dbReference type="ChEBI" id="CHEBI:456215"/>
        <dbReference type="EC" id="2.7.6.1"/>
    </reaction>
</comment>
<comment type="cofactor">
    <cofactor evidence="1">
        <name>Mg(2+)</name>
        <dbReference type="ChEBI" id="CHEBI:18420"/>
    </cofactor>
    <text evidence="1">Binds 2 Mg(2+) ions per subunit.</text>
</comment>
<comment type="pathway">
    <text evidence="1">Metabolic intermediate biosynthesis; 5-phospho-alpha-D-ribose 1-diphosphate biosynthesis; 5-phospho-alpha-D-ribose 1-diphosphate from D-ribose 5-phosphate (route I): step 1/1.</text>
</comment>
<comment type="subunit">
    <text evidence="1">Homohexamer.</text>
</comment>
<comment type="subcellular location">
    <subcellularLocation>
        <location evidence="1">Cytoplasm</location>
    </subcellularLocation>
</comment>
<comment type="similarity">
    <text evidence="1">Belongs to the ribose-phosphate pyrophosphokinase family. Class I subfamily.</text>
</comment>
<comment type="sequence caution" evidence="2">
    <conflict type="erroneous initiation">
        <sequence resource="EMBL-CDS" id="CAE43392"/>
    </conflict>
    <text>Extended N-terminus.</text>
</comment>
<feature type="chain" id="PRO_0000141114" description="Ribose-phosphate pyrophosphokinase">
    <location>
        <begin position="1"/>
        <end position="310"/>
    </location>
</feature>
<feature type="active site" evidence="1">
    <location>
        <position position="189"/>
    </location>
</feature>
<feature type="binding site" evidence="1">
    <location>
        <begin position="33"/>
        <end position="35"/>
    </location>
    <ligand>
        <name>ATP</name>
        <dbReference type="ChEBI" id="CHEBI:30616"/>
    </ligand>
</feature>
<feature type="binding site" evidence="1">
    <location>
        <begin position="92"/>
        <end position="93"/>
    </location>
    <ligand>
        <name>ATP</name>
        <dbReference type="ChEBI" id="CHEBI:30616"/>
    </ligand>
</feature>
<feature type="binding site" evidence="1">
    <location>
        <position position="127"/>
    </location>
    <ligand>
        <name>Mg(2+)</name>
        <dbReference type="ChEBI" id="CHEBI:18420"/>
        <label>1</label>
    </ligand>
</feature>
<feature type="binding site" evidence="1">
    <location>
        <position position="166"/>
    </location>
    <ligand>
        <name>Mg(2+)</name>
        <dbReference type="ChEBI" id="CHEBI:18420"/>
        <label>2</label>
    </ligand>
</feature>
<feature type="binding site" evidence="1">
    <location>
        <position position="191"/>
    </location>
    <ligand>
        <name>D-ribose 5-phosphate</name>
        <dbReference type="ChEBI" id="CHEBI:78346"/>
    </ligand>
</feature>
<feature type="binding site" evidence="1">
    <location>
        <position position="215"/>
    </location>
    <ligand>
        <name>D-ribose 5-phosphate</name>
        <dbReference type="ChEBI" id="CHEBI:78346"/>
    </ligand>
</feature>
<feature type="binding site" evidence="1">
    <location>
        <begin position="219"/>
        <end position="223"/>
    </location>
    <ligand>
        <name>D-ribose 5-phosphate</name>
        <dbReference type="ChEBI" id="CHEBI:78346"/>
    </ligand>
</feature>
<proteinExistence type="inferred from homology"/>
<evidence type="ECO:0000255" key="1">
    <source>
        <dbReference type="HAMAP-Rule" id="MF_00583"/>
    </source>
</evidence>
<evidence type="ECO:0000305" key="2"/>
<organism>
    <name type="scientific">Bordetella pertussis (strain Tohama I / ATCC BAA-589 / NCTC 13251)</name>
    <dbReference type="NCBI Taxonomy" id="257313"/>
    <lineage>
        <taxon>Bacteria</taxon>
        <taxon>Pseudomonadati</taxon>
        <taxon>Pseudomonadota</taxon>
        <taxon>Betaproteobacteria</taxon>
        <taxon>Burkholderiales</taxon>
        <taxon>Alcaligenaceae</taxon>
        <taxon>Bordetella</taxon>
    </lineage>
</organism>
<reference key="1">
    <citation type="journal article" date="2003" name="Nat. Genet.">
        <title>Comparative analysis of the genome sequences of Bordetella pertussis, Bordetella parapertussis and Bordetella bronchiseptica.</title>
        <authorList>
            <person name="Parkhill J."/>
            <person name="Sebaihia M."/>
            <person name="Preston A."/>
            <person name="Murphy L.D."/>
            <person name="Thomson N.R."/>
            <person name="Harris D.E."/>
            <person name="Holden M.T.G."/>
            <person name="Churcher C.M."/>
            <person name="Bentley S.D."/>
            <person name="Mungall K.L."/>
            <person name="Cerdeno-Tarraga A.-M."/>
            <person name="Temple L."/>
            <person name="James K.D."/>
            <person name="Harris B."/>
            <person name="Quail M.A."/>
            <person name="Achtman M."/>
            <person name="Atkin R."/>
            <person name="Baker S."/>
            <person name="Basham D."/>
            <person name="Bason N."/>
            <person name="Cherevach I."/>
            <person name="Chillingworth T."/>
            <person name="Collins M."/>
            <person name="Cronin A."/>
            <person name="Davis P."/>
            <person name="Doggett J."/>
            <person name="Feltwell T."/>
            <person name="Goble A."/>
            <person name="Hamlin N."/>
            <person name="Hauser H."/>
            <person name="Holroyd S."/>
            <person name="Jagels K."/>
            <person name="Leather S."/>
            <person name="Moule S."/>
            <person name="Norberczak H."/>
            <person name="O'Neil S."/>
            <person name="Ormond D."/>
            <person name="Price C."/>
            <person name="Rabbinowitsch E."/>
            <person name="Rutter S."/>
            <person name="Sanders M."/>
            <person name="Saunders D."/>
            <person name="Seeger K."/>
            <person name="Sharp S."/>
            <person name="Simmonds M."/>
            <person name="Skelton J."/>
            <person name="Squares R."/>
            <person name="Squares S."/>
            <person name="Stevens K."/>
            <person name="Unwin L."/>
            <person name="Whitehead S."/>
            <person name="Barrell B.G."/>
            <person name="Maskell D.J."/>
        </authorList>
    </citation>
    <scope>NUCLEOTIDE SEQUENCE [LARGE SCALE GENOMIC DNA]</scope>
    <source>
        <strain>Tohama I / ATCC BAA-589 / NCTC 13251</strain>
    </source>
</reference>